<geneLocation type="chloroplast"/>
<feature type="propeptide" id="PRO_0000299989" evidence="1">
    <location>
        <begin position="1"/>
        <end position="2"/>
    </location>
</feature>
<feature type="chain" id="PRO_0000299990" description="Ribulose bisphosphate carboxylase large chain">
    <location>
        <begin position="3"/>
        <end position="475"/>
    </location>
</feature>
<feature type="active site" description="Proton acceptor" evidence="1">
    <location>
        <position position="175"/>
    </location>
</feature>
<feature type="active site" description="Proton acceptor" evidence="1">
    <location>
        <position position="294"/>
    </location>
</feature>
<feature type="binding site" description="in homodimeric partner" evidence="1">
    <location>
        <position position="123"/>
    </location>
    <ligand>
        <name>substrate</name>
    </ligand>
</feature>
<feature type="binding site" evidence="1">
    <location>
        <position position="173"/>
    </location>
    <ligand>
        <name>substrate</name>
    </ligand>
</feature>
<feature type="binding site" evidence="1">
    <location>
        <position position="177"/>
    </location>
    <ligand>
        <name>substrate</name>
    </ligand>
</feature>
<feature type="binding site" description="via carbamate group" evidence="1">
    <location>
        <position position="201"/>
    </location>
    <ligand>
        <name>Mg(2+)</name>
        <dbReference type="ChEBI" id="CHEBI:18420"/>
    </ligand>
</feature>
<feature type="binding site" evidence="1">
    <location>
        <position position="203"/>
    </location>
    <ligand>
        <name>Mg(2+)</name>
        <dbReference type="ChEBI" id="CHEBI:18420"/>
    </ligand>
</feature>
<feature type="binding site" evidence="1">
    <location>
        <position position="204"/>
    </location>
    <ligand>
        <name>Mg(2+)</name>
        <dbReference type="ChEBI" id="CHEBI:18420"/>
    </ligand>
</feature>
<feature type="binding site" evidence="1">
    <location>
        <position position="295"/>
    </location>
    <ligand>
        <name>substrate</name>
    </ligand>
</feature>
<feature type="binding site" evidence="1">
    <location>
        <position position="327"/>
    </location>
    <ligand>
        <name>substrate</name>
    </ligand>
</feature>
<feature type="binding site" evidence="1">
    <location>
        <position position="379"/>
    </location>
    <ligand>
        <name>substrate</name>
    </ligand>
</feature>
<feature type="site" description="Transition state stabilizer" evidence="1">
    <location>
        <position position="334"/>
    </location>
</feature>
<feature type="modified residue" description="N-acetylproline" evidence="1">
    <location>
        <position position="3"/>
    </location>
</feature>
<feature type="modified residue" description="N6,N6,N6-trimethyllysine" evidence="1">
    <location>
        <position position="14"/>
    </location>
</feature>
<feature type="modified residue" description="N6-carboxylysine" evidence="1">
    <location>
        <position position="201"/>
    </location>
</feature>
<feature type="disulfide bond" description="Interchain; in linked form" evidence="1">
    <location>
        <position position="247"/>
    </location>
</feature>
<gene>
    <name evidence="1" type="primary">rbcL</name>
</gene>
<proteinExistence type="inferred from homology"/>
<name>RBL_CHLAT</name>
<evidence type="ECO:0000255" key="1">
    <source>
        <dbReference type="HAMAP-Rule" id="MF_01338"/>
    </source>
</evidence>
<dbReference type="EC" id="4.1.1.39" evidence="1"/>
<dbReference type="EMBL" id="DQ422812">
    <property type="protein sequence ID" value="ABD62226.2"/>
    <property type="molecule type" value="Genomic_DNA"/>
</dbReference>
<dbReference type="RefSeq" id="YP_001019152.1">
    <property type="nucleotide sequence ID" value="NC_008822.1"/>
</dbReference>
<dbReference type="SMR" id="Q19V64"/>
<dbReference type="GeneID" id="4783297"/>
<dbReference type="GO" id="GO:0009507">
    <property type="term" value="C:chloroplast"/>
    <property type="evidence" value="ECO:0007669"/>
    <property type="project" value="UniProtKB-SubCell"/>
</dbReference>
<dbReference type="GO" id="GO:0000287">
    <property type="term" value="F:magnesium ion binding"/>
    <property type="evidence" value="ECO:0007669"/>
    <property type="project" value="UniProtKB-UniRule"/>
</dbReference>
<dbReference type="GO" id="GO:0004497">
    <property type="term" value="F:monooxygenase activity"/>
    <property type="evidence" value="ECO:0007669"/>
    <property type="project" value="UniProtKB-KW"/>
</dbReference>
<dbReference type="GO" id="GO:0016984">
    <property type="term" value="F:ribulose-bisphosphate carboxylase activity"/>
    <property type="evidence" value="ECO:0007669"/>
    <property type="project" value="UniProtKB-UniRule"/>
</dbReference>
<dbReference type="GO" id="GO:0009853">
    <property type="term" value="P:photorespiration"/>
    <property type="evidence" value="ECO:0007669"/>
    <property type="project" value="UniProtKB-KW"/>
</dbReference>
<dbReference type="GO" id="GO:0019253">
    <property type="term" value="P:reductive pentose-phosphate cycle"/>
    <property type="evidence" value="ECO:0007669"/>
    <property type="project" value="UniProtKB-UniRule"/>
</dbReference>
<dbReference type="CDD" id="cd08212">
    <property type="entry name" value="RuBisCO_large_I"/>
    <property type="match status" value="1"/>
</dbReference>
<dbReference type="FunFam" id="3.20.20.110:FF:000001">
    <property type="entry name" value="Ribulose bisphosphate carboxylase large chain"/>
    <property type="match status" value="1"/>
</dbReference>
<dbReference type="FunFam" id="3.30.70.150:FF:000001">
    <property type="entry name" value="Ribulose bisphosphate carboxylase large chain"/>
    <property type="match status" value="1"/>
</dbReference>
<dbReference type="Gene3D" id="3.20.20.110">
    <property type="entry name" value="Ribulose bisphosphate carboxylase, large subunit, C-terminal domain"/>
    <property type="match status" value="1"/>
</dbReference>
<dbReference type="Gene3D" id="3.30.70.150">
    <property type="entry name" value="RuBisCO large subunit, N-terminal domain"/>
    <property type="match status" value="1"/>
</dbReference>
<dbReference type="HAMAP" id="MF_01338">
    <property type="entry name" value="RuBisCO_L_type1"/>
    <property type="match status" value="1"/>
</dbReference>
<dbReference type="InterPro" id="IPR033966">
    <property type="entry name" value="RuBisCO"/>
</dbReference>
<dbReference type="InterPro" id="IPR020878">
    <property type="entry name" value="RuBisCo_large_chain_AS"/>
</dbReference>
<dbReference type="InterPro" id="IPR000685">
    <property type="entry name" value="RuBisCO_lsu_C"/>
</dbReference>
<dbReference type="InterPro" id="IPR036376">
    <property type="entry name" value="RuBisCO_lsu_C_sf"/>
</dbReference>
<dbReference type="InterPro" id="IPR017443">
    <property type="entry name" value="RuBisCO_lsu_fd_N"/>
</dbReference>
<dbReference type="InterPro" id="IPR036422">
    <property type="entry name" value="RuBisCO_lsu_N_sf"/>
</dbReference>
<dbReference type="InterPro" id="IPR020888">
    <property type="entry name" value="RuBisCO_lsuI"/>
</dbReference>
<dbReference type="NCBIfam" id="NF003252">
    <property type="entry name" value="PRK04208.1"/>
    <property type="match status" value="1"/>
</dbReference>
<dbReference type="PANTHER" id="PTHR42704">
    <property type="entry name" value="RIBULOSE BISPHOSPHATE CARBOXYLASE"/>
    <property type="match status" value="1"/>
</dbReference>
<dbReference type="PANTHER" id="PTHR42704:SF17">
    <property type="entry name" value="RIBULOSE BISPHOSPHATE CARBOXYLASE LARGE CHAIN"/>
    <property type="match status" value="1"/>
</dbReference>
<dbReference type="Pfam" id="PF00016">
    <property type="entry name" value="RuBisCO_large"/>
    <property type="match status" value="1"/>
</dbReference>
<dbReference type="Pfam" id="PF02788">
    <property type="entry name" value="RuBisCO_large_N"/>
    <property type="match status" value="1"/>
</dbReference>
<dbReference type="SFLD" id="SFLDG01052">
    <property type="entry name" value="RuBisCO"/>
    <property type="match status" value="1"/>
</dbReference>
<dbReference type="SFLD" id="SFLDS00014">
    <property type="entry name" value="RuBisCO"/>
    <property type="match status" value="1"/>
</dbReference>
<dbReference type="SFLD" id="SFLDG00301">
    <property type="entry name" value="RuBisCO-like_proteins"/>
    <property type="match status" value="1"/>
</dbReference>
<dbReference type="SUPFAM" id="SSF51649">
    <property type="entry name" value="RuBisCo, C-terminal domain"/>
    <property type="match status" value="1"/>
</dbReference>
<dbReference type="SUPFAM" id="SSF54966">
    <property type="entry name" value="RuBisCO, large subunit, small (N-terminal) domain"/>
    <property type="match status" value="1"/>
</dbReference>
<dbReference type="PROSITE" id="PS00157">
    <property type="entry name" value="RUBISCO_LARGE"/>
    <property type="match status" value="1"/>
</dbReference>
<organism>
    <name type="scientific">Chlorokybus atmophyticus</name>
    <name type="common">Soil alga</name>
    <dbReference type="NCBI Taxonomy" id="3144"/>
    <lineage>
        <taxon>Eukaryota</taxon>
        <taxon>Viridiplantae</taxon>
        <taxon>Streptophyta</taxon>
        <taxon>Chlorokybophyceae</taxon>
        <taxon>Chlorokybales</taxon>
        <taxon>Chlorokybaceae</taxon>
        <taxon>Chlorokybus</taxon>
    </lineage>
</organism>
<sequence>MSPQTETRTGTGFKAGVKDYRLTYYTPDYVTKETDILAAFRMTPQPGVPPEEAGAAVAAESSTGTWTTVWTDGLTSLDRYKGRCYDIEPVAGEDNQYIAYVAYPLDLFEEGSVTNLFTSIVGNVFGFKALRALRLEDLRIPPAYVKTFQGPPHGIQVERDKLNKYGRPLLGCTIKPKLGLSAKNYGRAVYECLRGGLDFTKDDENVNSQPFMRWRDRFLFCAEAIYKAQAETGEIKGHYLNATAGTCEEMLKRAEYAKELGVPIVMHDYLTGGFTANTSLSHYCRDNGLLLHIHRAMHAVIDRQRNHGIHFRVLAKALRMSGGDHIHSGTVVGKLEGEREVTLGFVDLLRDDYIEKDRSRGIYFTQDWVSLPGVLPVASGGIHVWHMPALTEIFGDDSVLQFGGGTLGHPWGNAPGAVANRVALEACVQARNEGRDLAREGNNIIREAAKFSPELAAACEVWKEIKFEFETIDTL</sequence>
<protein>
    <recommendedName>
        <fullName evidence="1">Ribulose bisphosphate carboxylase large chain</fullName>
        <shortName evidence="1">RuBisCO large subunit</shortName>
        <ecNumber evidence="1">4.1.1.39</ecNumber>
    </recommendedName>
</protein>
<comment type="function">
    <text evidence="1">RuBisCO catalyzes two reactions: the carboxylation of D-ribulose 1,5-bisphosphate, the primary event in carbon dioxide fixation, as well as the oxidative fragmentation of the pentose substrate in the photorespiration process. Both reactions occur simultaneously and in competition at the same active site.</text>
</comment>
<comment type="catalytic activity">
    <reaction evidence="1">
        <text>2 (2R)-3-phosphoglycerate + 2 H(+) = D-ribulose 1,5-bisphosphate + CO2 + H2O</text>
        <dbReference type="Rhea" id="RHEA:23124"/>
        <dbReference type="ChEBI" id="CHEBI:15377"/>
        <dbReference type="ChEBI" id="CHEBI:15378"/>
        <dbReference type="ChEBI" id="CHEBI:16526"/>
        <dbReference type="ChEBI" id="CHEBI:57870"/>
        <dbReference type="ChEBI" id="CHEBI:58272"/>
        <dbReference type="EC" id="4.1.1.39"/>
    </reaction>
</comment>
<comment type="catalytic activity">
    <reaction evidence="1">
        <text>D-ribulose 1,5-bisphosphate + O2 = 2-phosphoglycolate + (2R)-3-phosphoglycerate + 2 H(+)</text>
        <dbReference type="Rhea" id="RHEA:36631"/>
        <dbReference type="ChEBI" id="CHEBI:15378"/>
        <dbReference type="ChEBI" id="CHEBI:15379"/>
        <dbReference type="ChEBI" id="CHEBI:57870"/>
        <dbReference type="ChEBI" id="CHEBI:58033"/>
        <dbReference type="ChEBI" id="CHEBI:58272"/>
    </reaction>
</comment>
<comment type="cofactor">
    <cofactor evidence="1">
        <name>Mg(2+)</name>
        <dbReference type="ChEBI" id="CHEBI:18420"/>
    </cofactor>
    <text evidence="1">Binds 1 Mg(2+) ion per subunit.</text>
</comment>
<comment type="subunit">
    <text evidence="1">Heterohexadecamer of 8 large chains and 8 small chains; disulfide-linked. The disulfide link is formed within the large subunit homodimers.</text>
</comment>
<comment type="subcellular location">
    <subcellularLocation>
        <location>Plastid</location>
        <location>Chloroplast</location>
    </subcellularLocation>
</comment>
<comment type="PTM">
    <text evidence="1">The disulfide bond which can form in the large chain dimeric partners within the hexadecamer appears to be associated with oxidative stress and protein turnover.</text>
</comment>
<comment type="miscellaneous">
    <text evidence="1">The basic functional RuBisCO is composed of a large chain homodimer in a 'head-to-tail' conformation. In form I RuBisCO this homodimer is arranged in a barrel-like tetramer with the small subunits forming a tetrameric 'cap' on each end of the 'barrel'.</text>
</comment>
<comment type="similarity">
    <text evidence="1">Belongs to the RuBisCO large chain family. Type I subfamily.</text>
</comment>
<keyword id="KW-0007">Acetylation</keyword>
<keyword id="KW-0113">Calvin cycle</keyword>
<keyword id="KW-0120">Carbon dioxide fixation</keyword>
<keyword id="KW-0150">Chloroplast</keyword>
<keyword id="KW-1015">Disulfide bond</keyword>
<keyword id="KW-0456">Lyase</keyword>
<keyword id="KW-0460">Magnesium</keyword>
<keyword id="KW-0479">Metal-binding</keyword>
<keyword id="KW-0488">Methylation</keyword>
<keyword id="KW-0503">Monooxygenase</keyword>
<keyword id="KW-0560">Oxidoreductase</keyword>
<keyword id="KW-0601">Photorespiration</keyword>
<keyword id="KW-0602">Photosynthesis</keyword>
<keyword id="KW-0934">Plastid</keyword>
<reference key="1">
    <citation type="journal article" date="2007" name="BMC Biol.">
        <title>A clade uniting the green algae Mesostigma viride and Chlorokybus atmophyticus represents the deepest branch of the Streptophyta in chloroplast genome-based phylogenies.</title>
        <authorList>
            <person name="Lemieux C."/>
            <person name="Otis C."/>
            <person name="Turmel M."/>
        </authorList>
    </citation>
    <scope>NUCLEOTIDE SEQUENCE [LARGE SCALE GENOMIC DNA]</scope>
    <source>
        <strain>SAG 48.80</strain>
    </source>
</reference>
<accession>Q19V64</accession>